<name>TATA_MYCMM</name>
<keyword id="KW-1003">Cell membrane</keyword>
<keyword id="KW-0472">Membrane</keyword>
<keyword id="KW-0653">Protein transport</keyword>
<keyword id="KW-1185">Reference proteome</keyword>
<keyword id="KW-0811">Translocation</keyword>
<keyword id="KW-0812">Transmembrane</keyword>
<keyword id="KW-1133">Transmembrane helix</keyword>
<keyword id="KW-0813">Transport</keyword>
<reference key="1">
    <citation type="journal article" date="2008" name="Genome Res.">
        <title>Insights from the complete genome sequence of Mycobacterium marinum on the evolution of Mycobacterium tuberculosis.</title>
        <authorList>
            <person name="Stinear T.P."/>
            <person name="Seemann T."/>
            <person name="Harrison P.F."/>
            <person name="Jenkin G.A."/>
            <person name="Davies J.K."/>
            <person name="Johnson P.D."/>
            <person name="Abdellah Z."/>
            <person name="Arrowsmith C."/>
            <person name="Chillingworth T."/>
            <person name="Churcher C."/>
            <person name="Clarke K."/>
            <person name="Cronin A."/>
            <person name="Davis P."/>
            <person name="Goodhead I."/>
            <person name="Holroyd N."/>
            <person name="Jagels K."/>
            <person name="Lord A."/>
            <person name="Moule S."/>
            <person name="Mungall K."/>
            <person name="Norbertczak H."/>
            <person name="Quail M.A."/>
            <person name="Rabbinowitsch E."/>
            <person name="Walker D."/>
            <person name="White B."/>
            <person name="Whitehead S."/>
            <person name="Small P.L."/>
            <person name="Brosch R."/>
            <person name="Ramakrishnan L."/>
            <person name="Fischbach M.A."/>
            <person name="Parkhill J."/>
            <person name="Cole S.T."/>
        </authorList>
    </citation>
    <scope>NUCLEOTIDE SEQUENCE [LARGE SCALE GENOMIC DNA]</scope>
    <source>
        <strain>ATCC BAA-535 / M</strain>
    </source>
</reference>
<comment type="function">
    <text evidence="1">Part of the twin-arginine translocation (Tat) system that transports large folded proteins containing a characteristic twin-arginine motif in their signal peptide across membranes. TatA could form the protein-conducting channel of the Tat system.</text>
</comment>
<comment type="subunit">
    <text evidence="1">The Tat system comprises two distinct complexes: a TatABC complex, containing multiple copies of TatA, TatB and TatC subunits, and a separate TatA complex, containing only TatA subunits. Substrates initially bind to the TatABC complex, which probably triggers association of the separate TatA complex to form the active translocon.</text>
</comment>
<comment type="subcellular location">
    <subcellularLocation>
        <location evidence="1">Cell membrane</location>
        <topology evidence="1">Single-pass membrane protein</topology>
    </subcellularLocation>
</comment>
<comment type="similarity">
    <text evidence="1">Belongs to the TatA/E family.</text>
</comment>
<gene>
    <name evidence="1" type="primary">tatA</name>
    <name type="ordered locus">MMAR_3080</name>
</gene>
<evidence type="ECO:0000255" key="1">
    <source>
        <dbReference type="HAMAP-Rule" id="MF_00236"/>
    </source>
</evidence>
<evidence type="ECO:0000256" key="2">
    <source>
        <dbReference type="SAM" id="MobiDB-lite"/>
    </source>
</evidence>
<feature type="chain" id="PRO_1000197885" description="Sec-independent protein translocase protein TatA">
    <location>
        <begin position="1"/>
        <end position="88"/>
    </location>
</feature>
<feature type="transmembrane region" description="Helical" evidence="1">
    <location>
        <begin position="1"/>
        <end position="21"/>
    </location>
</feature>
<feature type="region of interest" description="Disordered" evidence="2">
    <location>
        <begin position="43"/>
        <end position="88"/>
    </location>
</feature>
<feature type="compositionally biased region" description="Basic and acidic residues" evidence="2">
    <location>
        <begin position="43"/>
        <end position="52"/>
    </location>
</feature>
<feature type="compositionally biased region" description="Polar residues" evidence="2">
    <location>
        <begin position="57"/>
        <end position="71"/>
    </location>
</feature>
<organism>
    <name type="scientific">Mycobacterium marinum (strain ATCC BAA-535 / M)</name>
    <dbReference type="NCBI Taxonomy" id="216594"/>
    <lineage>
        <taxon>Bacteria</taxon>
        <taxon>Bacillati</taxon>
        <taxon>Actinomycetota</taxon>
        <taxon>Actinomycetes</taxon>
        <taxon>Mycobacteriales</taxon>
        <taxon>Mycobacteriaceae</taxon>
        <taxon>Mycobacterium</taxon>
        <taxon>Mycobacterium ulcerans group</taxon>
    </lineage>
</organism>
<protein>
    <recommendedName>
        <fullName evidence="1">Sec-independent protein translocase protein TatA</fullName>
    </recommendedName>
</protein>
<proteinExistence type="inferred from homology"/>
<dbReference type="EMBL" id="CP000854">
    <property type="protein sequence ID" value="ACC41515.1"/>
    <property type="molecule type" value="Genomic_DNA"/>
</dbReference>
<dbReference type="RefSeq" id="WP_011740313.1">
    <property type="nucleotide sequence ID" value="NC_010612.1"/>
</dbReference>
<dbReference type="SMR" id="B2HFV1"/>
<dbReference type="STRING" id="216594.MMAR_3080"/>
<dbReference type="GeneID" id="93437174"/>
<dbReference type="KEGG" id="mmi:MMAR_3080"/>
<dbReference type="eggNOG" id="COG1826">
    <property type="taxonomic scope" value="Bacteria"/>
</dbReference>
<dbReference type="HOGENOM" id="CLU_086034_4_2_11"/>
<dbReference type="OrthoDB" id="5245163at2"/>
<dbReference type="Proteomes" id="UP000001190">
    <property type="component" value="Chromosome"/>
</dbReference>
<dbReference type="GO" id="GO:0033281">
    <property type="term" value="C:TAT protein transport complex"/>
    <property type="evidence" value="ECO:0007669"/>
    <property type="project" value="UniProtKB-UniRule"/>
</dbReference>
<dbReference type="GO" id="GO:0008320">
    <property type="term" value="F:protein transmembrane transporter activity"/>
    <property type="evidence" value="ECO:0007669"/>
    <property type="project" value="UniProtKB-UniRule"/>
</dbReference>
<dbReference type="GO" id="GO:0043953">
    <property type="term" value="P:protein transport by the Tat complex"/>
    <property type="evidence" value="ECO:0007669"/>
    <property type="project" value="UniProtKB-UniRule"/>
</dbReference>
<dbReference type="Gene3D" id="1.20.5.3310">
    <property type="match status" value="1"/>
</dbReference>
<dbReference type="HAMAP" id="MF_00236">
    <property type="entry name" value="TatA_E"/>
    <property type="match status" value="1"/>
</dbReference>
<dbReference type="InterPro" id="IPR003369">
    <property type="entry name" value="TatA/B/E"/>
</dbReference>
<dbReference type="InterPro" id="IPR006312">
    <property type="entry name" value="TatA/E"/>
</dbReference>
<dbReference type="NCBIfam" id="NF001854">
    <property type="entry name" value="PRK00575.1"/>
    <property type="match status" value="1"/>
</dbReference>
<dbReference type="NCBIfam" id="TIGR01411">
    <property type="entry name" value="tatAE"/>
    <property type="match status" value="1"/>
</dbReference>
<dbReference type="PANTHER" id="PTHR42982">
    <property type="entry name" value="SEC-INDEPENDENT PROTEIN TRANSLOCASE PROTEIN TATA"/>
    <property type="match status" value="1"/>
</dbReference>
<dbReference type="PANTHER" id="PTHR42982:SF8">
    <property type="entry name" value="SEC-INDEPENDENT PROTEIN TRANSLOCASE PROTEIN TATA"/>
    <property type="match status" value="1"/>
</dbReference>
<dbReference type="Pfam" id="PF02416">
    <property type="entry name" value="TatA_B_E"/>
    <property type="match status" value="1"/>
</dbReference>
<accession>B2HFV1</accession>
<sequence length="88" mass="9520">MGSLSPWHWAILAVVVIVLFGAKKLPDAARSLGKSMRIFKSEMREMQSETKAEPSAIETNTANPTPVQSQRIDPAAATGQDQTEARPA</sequence>